<proteinExistence type="inferred from homology"/>
<evidence type="ECO:0000255" key="1">
    <source>
        <dbReference type="HAMAP-Rule" id="MF_00202"/>
    </source>
</evidence>
<protein>
    <recommendedName>
        <fullName evidence="1">Isopentenyl-diphosphate Delta-isomerase</fullName>
        <shortName evidence="1">IPP isomerase</shortName>
        <ecNumber evidence="1">5.3.3.2</ecNumber>
    </recommendedName>
    <alternativeName>
        <fullName evidence="1">IPP:DMAPP isomerase</fullName>
    </alternativeName>
    <alternativeName>
        <fullName evidence="1">Isopentenyl pyrophosphate isomerase</fullName>
    </alternativeName>
</protein>
<organism>
    <name type="scientific">Escherichia coli O81 (strain ED1a)</name>
    <dbReference type="NCBI Taxonomy" id="585397"/>
    <lineage>
        <taxon>Bacteria</taxon>
        <taxon>Pseudomonadati</taxon>
        <taxon>Pseudomonadota</taxon>
        <taxon>Gammaproteobacteria</taxon>
        <taxon>Enterobacterales</taxon>
        <taxon>Enterobacteriaceae</taxon>
        <taxon>Escherichia</taxon>
    </lineage>
</organism>
<dbReference type="EC" id="5.3.3.2" evidence="1"/>
<dbReference type="EMBL" id="CU928162">
    <property type="protein sequence ID" value="CAR09359.1"/>
    <property type="molecule type" value="Genomic_DNA"/>
</dbReference>
<dbReference type="RefSeq" id="WP_001192798.1">
    <property type="nucleotide sequence ID" value="NC_011745.1"/>
</dbReference>
<dbReference type="SMR" id="B7MZ42"/>
<dbReference type="KEGG" id="ecq:ECED1_3348"/>
<dbReference type="HOGENOM" id="CLU_060552_2_0_6"/>
<dbReference type="UniPathway" id="UPA00059">
    <property type="reaction ID" value="UER00104"/>
</dbReference>
<dbReference type="Proteomes" id="UP000000748">
    <property type="component" value="Chromosome"/>
</dbReference>
<dbReference type="GO" id="GO:0005737">
    <property type="term" value="C:cytoplasm"/>
    <property type="evidence" value="ECO:0007669"/>
    <property type="project" value="UniProtKB-SubCell"/>
</dbReference>
<dbReference type="GO" id="GO:0004452">
    <property type="term" value="F:isopentenyl-diphosphate delta-isomerase activity"/>
    <property type="evidence" value="ECO:0007669"/>
    <property type="project" value="UniProtKB-UniRule"/>
</dbReference>
<dbReference type="GO" id="GO:0046872">
    <property type="term" value="F:metal ion binding"/>
    <property type="evidence" value="ECO:0007669"/>
    <property type="project" value="UniProtKB-KW"/>
</dbReference>
<dbReference type="GO" id="GO:0050992">
    <property type="term" value="P:dimethylallyl diphosphate biosynthetic process"/>
    <property type="evidence" value="ECO:0007669"/>
    <property type="project" value="UniProtKB-UniRule"/>
</dbReference>
<dbReference type="GO" id="GO:0008299">
    <property type="term" value="P:isoprenoid biosynthetic process"/>
    <property type="evidence" value="ECO:0007669"/>
    <property type="project" value="UniProtKB-KW"/>
</dbReference>
<dbReference type="CDD" id="cd02885">
    <property type="entry name" value="NUDIX_IPP_Isomerase"/>
    <property type="match status" value="1"/>
</dbReference>
<dbReference type="FunFam" id="3.90.79.10:FF:000009">
    <property type="entry name" value="Isopentenyl-diphosphate Delta-isomerase"/>
    <property type="match status" value="1"/>
</dbReference>
<dbReference type="Gene3D" id="3.90.79.10">
    <property type="entry name" value="Nucleoside Triphosphate Pyrophosphohydrolase"/>
    <property type="match status" value="1"/>
</dbReference>
<dbReference type="HAMAP" id="MF_00202">
    <property type="entry name" value="Idi"/>
    <property type="match status" value="1"/>
</dbReference>
<dbReference type="InterPro" id="IPR056375">
    <property type="entry name" value="Idi_bact"/>
</dbReference>
<dbReference type="InterPro" id="IPR011876">
    <property type="entry name" value="IsopentenylPP_isomerase_typ1"/>
</dbReference>
<dbReference type="InterPro" id="IPR015797">
    <property type="entry name" value="NUDIX_hydrolase-like_dom_sf"/>
</dbReference>
<dbReference type="InterPro" id="IPR000086">
    <property type="entry name" value="NUDIX_hydrolase_dom"/>
</dbReference>
<dbReference type="NCBIfam" id="TIGR02150">
    <property type="entry name" value="IPP_isom_1"/>
    <property type="match status" value="1"/>
</dbReference>
<dbReference type="NCBIfam" id="NF002995">
    <property type="entry name" value="PRK03759.1"/>
    <property type="match status" value="1"/>
</dbReference>
<dbReference type="PANTHER" id="PTHR10885">
    <property type="entry name" value="ISOPENTENYL-DIPHOSPHATE DELTA-ISOMERASE"/>
    <property type="match status" value="1"/>
</dbReference>
<dbReference type="PANTHER" id="PTHR10885:SF0">
    <property type="entry name" value="ISOPENTENYL-DIPHOSPHATE DELTA-ISOMERASE"/>
    <property type="match status" value="1"/>
</dbReference>
<dbReference type="Pfam" id="PF00293">
    <property type="entry name" value="NUDIX"/>
    <property type="match status" value="1"/>
</dbReference>
<dbReference type="PIRSF" id="PIRSF018427">
    <property type="entry name" value="Isopntndiph_ism"/>
    <property type="match status" value="1"/>
</dbReference>
<dbReference type="SUPFAM" id="SSF55811">
    <property type="entry name" value="Nudix"/>
    <property type="match status" value="1"/>
</dbReference>
<dbReference type="PROSITE" id="PS51462">
    <property type="entry name" value="NUDIX"/>
    <property type="match status" value="1"/>
</dbReference>
<feature type="chain" id="PRO_1000124556" description="Isopentenyl-diphosphate Delta-isomerase">
    <location>
        <begin position="1"/>
        <end position="182"/>
    </location>
</feature>
<feature type="domain" description="Nudix hydrolase">
    <location>
        <begin position="30"/>
        <end position="164"/>
    </location>
</feature>
<feature type="active site" evidence="1">
    <location>
        <position position="67"/>
    </location>
</feature>
<feature type="active site" evidence="1">
    <location>
        <position position="116"/>
    </location>
</feature>
<feature type="binding site" evidence="1">
    <location>
        <position position="25"/>
    </location>
    <ligand>
        <name>Mn(2+)</name>
        <dbReference type="ChEBI" id="CHEBI:29035"/>
    </ligand>
</feature>
<feature type="binding site" evidence="1">
    <location>
        <position position="32"/>
    </location>
    <ligand>
        <name>Mn(2+)</name>
        <dbReference type="ChEBI" id="CHEBI:29035"/>
    </ligand>
</feature>
<feature type="binding site" evidence="1">
    <location>
        <position position="69"/>
    </location>
    <ligand>
        <name>Mn(2+)</name>
        <dbReference type="ChEBI" id="CHEBI:29035"/>
    </ligand>
</feature>
<feature type="binding site" evidence="1">
    <location>
        <position position="87"/>
    </location>
    <ligand>
        <name>Mg(2+)</name>
        <dbReference type="ChEBI" id="CHEBI:18420"/>
    </ligand>
</feature>
<feature type="binding site" evidence="1">
    <location>
        <position position="114"/>
    </location>
    <ligand>
        <name>Mn(2+)</name>
        <dbReference type="ChEBI" id="CHEBI:29035"/>
    </ligand>
</feature>
<feature type="binding site" evidence="1">
    <location>
        <position position="116"/>
    </location>
    <ligand>
        <name>Mn(2+)</name>
        <dbReference type="ChEBI" id="CHEBI:29035"/>
    </ligand>
</feature>
<name>IDI_ECO81</name>
<sequence length="182" mass="20481">MQTEHVILLNAQGVPTGTLEKYAAHTADTLLHLAFSSWLFNAKGQLLVTRRALSKKAWPGVWTNSVCGHPQLGESNEEAVIRRCRYELGVEITPPESIYPDFRYRATDPNGIVENEVCPVFAARTTSALQINDDEVMDYQWCDLAAVLRGIDATPWAFSPWMVMQATNREARKRLSAFTQLK</sequence>
<accession>B7MZ42</accession>
<gene>
    <name evidence="1" type="primary">idi</name>
    <name type="ordered locus">ECED1_3348</name>
</gene>
<comment type="function">
    <text evidence="1">Catalyzes the 1,3-allylic rearrangement of the homoallylic substrate isopentenyl (IPP) to its highly electrophilic allylic isomer, dimethylallyl diphosphate (DMAPP).</text>
</comment>
<comment type="catalytic activity">
    <reaction evidence="1">
        <text>isopentenyl diphosphate = dimethylallyl diphosphate</text>
        <dbReference type="Rhea" id="RHEA:23284"/>
        <dbReference type="ChEBI" id="CHEBI:57623"/>
        <dbReference type="ChEBI" id="CHEBI:128769"/>
        <dbReference type="EC" id="5.3.3.2"/>
    </reaction>
</comment>
<comment type="cofactor">
    <cofactor evidence="1">
        <name>Mg(2+)</name>
        <dbReference type="ChEBI" id="CHEBI:18420"/>
    </cofactor>
    <text evidence="1">Binds 1 Mg(2+) ion per subunit. The magnesium ion binds only when substrate is bound.</text>
</comment>
<comment type="cofactor">
    <cofactor evidence="1">
        <name>Mn(2+)</name>
        <dbReference type="ChEBI" id="CHEBI:29035"/>
    </cofactor>
    <text evidence="1">Binds 1 Mn(2+) ion per subunit.</text>
</comment>
<comment type="pathway">
    <text evidence="1">Isoprenoid biosynthesis; dimethylallyl diphosphate biosynthesis; dimethylallyl diphosphate from isopentenyl diphosphate: step 1/1.</text>
</comment>
<comment type="subunit">
    <text evidence="1">Homodimer.</text>
</comment>
<comment type="subcellular location">
    <subcellularLocation>
        <location evidence="1">Cytoplasm</location>
    </subcellularLocation>
</comment>
<comment type="similarity">
    <text evidence="1">Belongs to the IPP isomerase type 1 family.</text>
</comment>
<keyword id="KW-0963">Cytoplasm</keyword>
<keyword id="KW-0413">Isomerase</keyword>
<keyword id="KW-0414">Isoprene biosynthesis</keyword>
<keyword id="KW-0460">Magnesium</keyword>
<keyword id="KW-0464">Manganese</keyword>
<keyword id="KW-0479">Metal-binding</keyword>
<reference key="1">
    <citation type="journal article" date="2009" name="PLoS Genet.">
        <title>Organised genome dynamics in the Escherichia coli species results in highly diverse adaptive paths.</title>
        <authorList>
            <person name="Touchon M."/>
            <person name="Hoede C."/>
            <person name="Tenaillon O."/>
            <person name="Barbe V."/>
            <person name="Baeriswyl S."/>
            <person name="Bidet P."/>
            <person name="Bingen E."/>
            <person name="Bonacorsi S."/>
            <person name="Bouchier C."/>
            <person name="Bouvet O."/>
            <person name="Calteau A."/>
            <person name="Chiapello H."/>
            <person name="Clermont O."/>
            <person name="Cruveiller S."/>
            <person name="Danchin A."/>
            <person name="Diard M."/>
            <person name="Dossat C."/>
            <person name="Karoui M.E."/>
            <person name="Frapy E."/>
            <person name="Garry L."/>
            <person name="Ghigo J.M."/>
            <person name="Gilles A.M."/>
            <person name="Johnson J."/>
            <person name="Le Bouguenec C."/>
            <person name="Lescat M."/>
            <person name="Mangenot S."/>
            <person name="Martinez-Jehanne V."/>
            <person name="Matic I."/>
            <person name="Nassif X."/>
            <person name="Oztas S."/>
            <person name="Petit M.A."/>
            <person name="Pichon C."/>
            <person name="Rouy Z."/>
            <person name="Ruf C.S."/>
            <person name="Schneider D."/>
            <person name="Tourret J."/>
            <person name="Vacherie B."/>
            <person name="Vallenet D."/>
            <person name="Medigue C."/>
            <person name="Rocha E.P.C."/>
            <person name="Denamur E."/>
        </authorList>
    </citation>
    <scope>NUCLEOTIDE SEQUENCE [LARGE SCALE GENOMIC DNA]</scope>
    <source>
        <strain>ED1a</strain>
    </source>
</reference>